<dbReference type="EMBL" id="AK045392">
    <property type="protein sequence ID" value="BAC32341.1"/>
    <property type="molecule type" value="mRNA"/>
</dbReference>
<dbReference type="EMBL" id="AK046031">
    <property type="protein sequence ID" value="BAC32576.1"/>
    <property type="molecule type" value="mRNA"/>
</dbReference>
<dbReference type="EMBL" id="AK139425">
    <property type="protein sequence ID" value="BAE24007.1"/>
    <property type="molecule type" value="mRNA"/>
</dbReference>
<dbReference type="EMBL" id="BC019943">
    <property type="protein sequence ID" value="AAH19943.1"/>
    <property type="molecule type" value="mRNA"/>
</dbReference>
<dbReference type="CCDS" id="CCDS22221.1"/>
<dbReference type="RefSeq" id="NP_659176.2">
    <property type="nucleotide sequence ID" value="NM_144927.3"/>
</dbReference>
<dbReference type="FunCoup" id="Q8BGV4">
    <property type="interactions" value="3495"/>
</dbReference>
<dbReference type="STRING" id="10090.ENSMUSP00000147956"/>
<dbReference type="iPTMnet" id="Q8BGV4"/>
<dbReference type="PhosphoSitePlus" id="Q8BGV4"/>
<dbReference type="PaxDb" id="10090-ENSMUSP00000096441"/>
<dbReference type="PeptideAtlas" id="Q8BGV4"/>
<dbReference type="ProteomicsDB" id="297680"/>
<dbReference type="Pumba" id="Q8BGV4"/>
<dbReference type="Antibodypedia" id="10728">
    <property type="antibodies" value="47 antibodies from 17 providers"/>
</dbReference>
<dbReference type="Ensembl" id="ENSMUST00000098842.3">
    <property type="protein sequence ID" value="ENSMUSP00000096441.3"/>
    <property type="gene ID" value="ENSMUSG00000031577.11"/>
</dbReference>
<dbReference type="Ensembl" id="ENSMUST00000209851.2">
    <property type="protein sequence ID" value="ENSMUSP00000148056.2"/>
    <property type="gene ID" value="ENSMUSG00000031577.11"/>
</dbReference>
<dbReference type="Ensembl" id="ENSMUST00000209986.2">
    <property type="protein sequence ID" value="ENSMUSP00000147846.2"/>
    <property type="gene ID" value="ENSMUSG00000031577.11"/>
</dbReference>
<dbReference type="GeneID" id="234138"/>
<dbReference type="KEGG" id="mmu:234138"/>
<dbReference type="UCSC" id="uc009ljf.2">
    <property type="organism name" value="mouse"/>
</dbReference>
<dbReference type="AGR" id="MGI:2384576"/>
<dbReference type="CTD" id="80185"/>
<dbReference type="MGI" id="MGI:2384576">
    <property type="gene designation" value="Tti2"/>
</dbReference>
<dbReference type="VEuPathDB" id="HostDB:ENSMUSG00000031577"/>
<dbReference type="eggNOG" id="ENOG502QVMM">
    <property type="taxonomic scope" value="Eukaryota"/>
</dbReference>
<dbReference type="GeneTree" id="ENSGT00390000003878"/>
<dbReference type="HOGENOM" id="CLU_047507_0_0_1"/>
<dbReference type="InParanoid" id="Q8BGV4"/>
<dbReference type="OMA" id="NHCSQGQ"/>
<dbReference type="OrthoDB" id="6417021at2759"/>
<dbReference type="PhylomeDB" id="Q8BGV4"/>
<dbReference type="TreeFam" id="TF328871"/>
<dbReference type="BioGRID-ORCS" id="234138">
    <property type="hits" value="24 hits in 80 CRISPR screens"/>
</dbReference>
<dbReference type="ChiTaRS" id="Tti2">
    <property type="organism name" value="mouse"/>
</dbReference>
<dbReference type="PRO" id="PR:Q8BGV4"/>
<dbReference type="Proteomes" id="UP000000589">
    <property type="component" value="Chromosome 8"/>
</dbReference>
<dbReference type="RNAct" id="Q8BGV4">
    <property type="molecule type" value="protein"/>
</dbReference>
<dbReference type="Bgee" id="ENSMUSG00000031577">
    <property type="expression patterns" value="Expressed in ear vesicle and 228 other cell types or tissues"/>
</dbReference>
<dbReference type="ExpressionAtlas" id="Q8BGV4">
    <property type="expression patterns" value="baseline and differential"/>
</dbReference>
<dbReference type="GO" id="GO:0110078">
    <property type="term" value="C:TTT Hsp90 cochaperone complex"/>
    <property type="evidence" value="ECO:0000266"/>
    <property type="project" value="MGI"/>
</dbReference>
<dbReference type="Gene3D" id="1.25.10.10">
    <property type="entry name" value="Leucine-rich Repeat Variant"/>
    <property type="match status" value="1"/>
</dbReference>
<dbReference type="InterPro" id="IPR011989">
    <property type="entry name" value="ARM-like"/>
</dbReference>
<dbReference type="InterPro" id="IPR016024">
    <property type="entry name" value="ARM-type_fold"/>
</dbReference>
<dbReference type="InterPro" id="IPR018870">
    <property type="entry name" value="Tti2"/>
</dbReference>
<dbReference type="PANTHER" id="PTHR32226">
    <property type="entry name" value="TELO2-INTERACTING PROTEIN 2"/>
    <property type="match status" value="1"/>
</dbReference>
<dbReference type="PANTHER" id="PTHR32226:SF2">
    <property type="entry name" value="TELO2-INTERACTING PROTEIN 2"/>
    <property type="match status" value="1"/>
</dbReference>
<dbReference type="Pfam" id="PF10521">
    <property type="entry name" value="Tti2"/>
    <property type="match status" value="1"/>
</dbReference>
<dbReference type="SUPFAM" id="SSF48371">
    <property type="entry name" value="ARM repeat"/>
    <property type="match status" value="1"/>
</dbReference>
<protein>
    <recommendedName>
        <fullName>TELO2-interacting protein 2</fullName>
    </recommendedName>
</protein>
<feature type="chain" id="PRO_0000279415" description="TELO2-interacting protein 2">
    <location>
        <begin position="1"/>
        <end position="512"/>
    </location>
</feature>
<feature type="region of interest" description="Disordered" evidence="3">
    <location>
        <begin position="1"/>
        <end position="23"/>
    </location>
</feature>
<feature type="compositionally biased region" description="Basic and acidic residues" evidence="3">
    <location>
        <begin position="1"/>
        <end position="10"/>
    </location>
</feature>
<feature type="sequence conflict" description="In Ref. 1; BAE24007." evidence="4" ref="1">
    <original>K</original>
    <variation>R</variation>
    <location>
        <position position="31"/>
    </location>
</feature>
<feature type="sequence conflict" description="In Ref. 2; AAH19943." evidence="4" ref="2">
    <original>H</original>
    <variation>P</variation>
    <location>
        <position position="107"/>
    </location>
</feature>
<evidence type="ECO:0000250" key="1"/>
<evidence type="ECO:0000250" key="2">
    <source>
        <dbReference type="UniProtKB" id="Q6NXR4"/>
    </source>
</evidence>
<evidence type="ECO:0000256" key="3">
    <source>
        <dbReference type="SAM" id="MobiDB-lite"/>
    </source>
</evidence>
<evidence type="ECO:0000305" key="4"/>
<accession>Q8BGV4</accession>
<accession>Q3UTH3</accession>
<accession>Q8VE31</accession>
<organism>
    <name type="scientific">Mus musculus</name>
    <name type="common">Mouse</name>
    <dbReference type="NCBI Taxonomy" id="10090"/>
    <lineage>
        <taxon>Eukaryota</taxon>
        <taxon>Metazoa</taxon>
        <taxon>Chordata</taxon>
        <taxon>Craniata</taxon>
        <taxon>Vertebrata</taxon>
        <taxon>Euteleostomi</taxon>
        <taxon>Mammalia</taxon>
        <taxon>Eutheria</taxon>
        <taxon>Euarchontoglires</taxon>
        <taxon>Glires</taxon>
        <taxon>Rodentia</taxon>
        <taxon>Myomorpha</taxon>
        <taxon>Muroidea</taxon>
        <taxon>Muridae</taxon>
        <taxon>Murinae</taxon>
        <taxon>Mus</taxon>
        <taxon>Mus</taxon>
    </lineage>
</organism>
<gene>
    <name type="primary">Tti2</name>
</gene>
<comment type="function">
    <text evidence="1">Regulator of the DNA damage response (DDR). Part of the TTT complex that is required to stabilize protein levels of the phosphatidylinositol 3-kinase-related protein kinase (PIKK) family proteins. The TTT complex is involved in the cellular resistance to DNA damage stresses, like ionizing radiation (IR), ultraviolet (UV) and mitomycin C (MMC). Together with the TTT complex and HSP90 may participate in the proper folding of newly synthesized PIKKs (By similarity).</text>
</comment>
<comment type="subunit">
    <text evidence="2">Component of the TTT complex composed of TELO2, TTI1 and TTI2. Interacts with TELO2 and TTI1. Interacts with WAC; WAC positively regulates MTOR activity by promoting the assembly of the TTT complex and the RUVBL complex composed of RUVBL1 and RUVBL2 into the TTT-RUVBL complex which leads to the dimerization of the mTORC1 complex and its subsequent activation.</text>
</comment>
<comment type="similarity">
    <text evidence="4">Belongs to the TTI2 family.</text>
</comment>
<keyword id="KW-1185">Reference proteome</keyword>
<sequence length="512" mass="56702">MKLDSAEEKSGVGCSLPAEGSPPALEPAFSKILNRLSRPKSSGQGGARNAALKDLGALIEAAEGDRFFEGSGSGGSLRGMPEILGQVVRALEKFAAPEEKADGVEEHPEVPEKATEVGSLFLKLLGKVEAAKSSPDCPAWKTGLRHMSGPVYIFAITHRLKQPWTSPASQHVAGEVLSLLLRVTECSSVAGFLCGENEDDRGRFAVVLGLLKPHLNKETWKKNPAVKHVFSWTLQQVTQPWLNQHLEKILPPSLLISDDYQTENKILGVQCLHHIVVTVPAADLLQYNRAQVLYHALFNHLYMPEHHLIQAVLLCLLDLFPVLEKALHWKGDTARVTTHCHEVLQLILTHMEPEHRLLLRRTYARHLPAFVKRLGILTVRHLKRLEQVILGYLEVYDEPEDETRLKILETLKLVMQYTWPRIPCRVVVLLKALLKLICDISRDTIPTTEAAKSTMLQEATDCLILLDHCSQGQVKGLLAKIAVSCEDSTVVSCIRKVQQGSADSPGDDTEGD</sequence>
<proteinExistence type="evidence at transcript level"/>
<name>TTI2_MOUSE</name>
<reference key="1">
    <citation type="journal article" date="2005" name="Science">
        <title>The transcriptional landscape of the mammalian genome.</title>
        <authorList>
            <person name="Carninci P."/>
            <person name="Kasukawa T."/>
            <person name="Katayama S."/>
            <person name="Gough J."/>
            <person name="Frith M.C."/>
            <person name="Maeda N."/>
            <person name="Oyama R."/>
            <person name="Ravasi T."/>
            <person name="Lenhard B."/>
            <person name="Wells C."/>
            <person name="Kodzius R."/>
            <person name="Shimokawa K."/>
            <person name="Bajic V.B."/>
            <person name="Brenner S.E."/>
            <person name="Batalov S."/>
            <person name="Forrest A.R."/>
            <person name="Zavolan M."/>
            <person name="Davis M.J."/>
            <person name="Wilming L.G."/>
            <person name="Aidinis V."/>
            <person name="Allen J.E."/>
            <person name="Ambesi-Impiombato A."/>
            <person name="Apweiler R."/>
            <person name="Aturaliya R.N."/>
            <person name="Bailey T.L."/>
            <person name="Bansal M."/>
            <person name="Baxter L."/>
            <person name="Beisel K.W."/>
            <person name="Bersano T."/>
            <person name="Bono H."/>
            <person name="Chalk A.M."/>
            <person name="Chiu K.P."/>
            <person name="Choudhary V."/>
            <person name="Christoffels A."/>
            <person name="Clutterbuck D.R."/>
            <person name="Crowe M.L."/>
            <person name="Dalla E."/>
            <person name="Dalrymple B.P."/>
            <person name="de Bono B."/>
            <person name="Della Gatta G."/>
            <person name="di Bernardo D."/>
            <person name="Down T."/>
            <person name="Engstrom P."/>
            <person name="Fagiolini M."/>
            <person name="Faulkner G."/>
            <person name="Fletcher C.F."/>
            <person name="Fukushima T."/>
            <person name="Furuno M."/>
            <person name="Futaki S."/>
            <person name="Gariboldi M."/>
            <person name="Georgii-Hemming P."/>
            <person name="Gingeras T.R."/>
            <person name="Gojobori T."/>
            <person name="Green R.E."/>
            <person name="Gustincich S."/>
            <person name="Harbers M."/>
            <person name="Hayashi Y."/>
            <person name="Hensch T.K."/>
            <person name="Hirokawa N."/>
            <person name="Hill D."/>
            <person name="Huminiecki L."/>
            <person name="Iacono M."/>
            <person name="Ikeo K."/>
            <person name="Iwama A."/>
            <person name="Ishikawa T."/>
            <person name="Jakt M."/>
            <person name="Kanapin A."/>
            <person name="Katoh M."/>
            <person name="Kawasawa Y."/>
            <person name="Kelso J."/>
            <person name="Kitamura H."/>
            <person name="Kitano H."/>
            <person name="Kollias G."/>
            <person name="Krishnan S.P."/>
            <person name="Kruger A."/>
            <person name="Kummerfeld S.K."/>
            <person name="Kurochkin I.V."/>
            <person name="Lareau L.F."/>
            <person name="Lazarevic D."/>
            <person name="Lipovich L."/>
            <person name="Liu J."/>
            <person name="Liuni S."/>
            <person name="McWilliam S."/>
            <person name="Madan Babu M."/>
            <person name="Madera M."/>
            <person name="Marchionni L."/>
            <person name="Matsuda H."/>
            <person name="Matsuzawa S."/>
            <person name="Miki H."/>
            <person name="Mignone F."/>
            <person name="Miyake S."/>
            <person name="Morris K."/>
            <person name="Mottagui-Tabar S."/>
            <person name="Mulder N."/>
            <person name="Nakano N."/>
            <person name="Nakauchi H."/>
            <person name="Ng P."/>
            <person name="Nilsson R."/>
            <person name="Nishiguchi S."/>
            <person name="Nishikawa S."/>
            <person name="Nori F."/>
            <person name="Ohara O."/>
            <person name="Okazaki Y."/>
            <person name="Orlando V."/>
            <person name="Pang K.C."/>
            <person name="Pavan W.J."/>
            <person name="Pavesi G."/>
            <person name="Pesole G."/>
            <person name="Petrovsky N."/>
            <person name="Piazza S."/>
            <person name="Reed J."/>
            <person name="Reid J.F."/>
            <person name="Ring B.Z."/>
            <person name="Ringwald M."/>
            <person name="Rost B."/>
            <person name="Ruan Y."/>
            <person name="Salzberg S.L."/>
            <person name="Sandelin A."/>
            <person name="Schneider C."/>
            <person name="Schoenbach C."/>
            <person name="Sekiguchi K."/>
            <person name="Semple C.A."/>
            <person name="Seno S."/>
            <person name="Sessa L."/>
            <person name="Sheng Y."/>
            <person name="Shibata Y."/>
            <person name="Shimada H."/>
            <person name="Shimada K."/>
            <person name="Silva D."/>
            <person name="Sinclair B."/>
            <person name="Sperling S."/>
            <person name="Stupka E."/>
            <person name="Sugiura K."/>
            <person name="Sultana R."/>
            <person name="Takenaka Y."/>
            <person name="Taki K."/>
            <person name="Tammoja K."/>
            <person name="Tan S.L."/>
            <person name="Tang S."/>
            <person name="Taylor M.S."/>
            <person name="Tegner J."/>
            <person name="Teichmann S.A."/>
            <person name="Ueda H.R."/>
            <person name="van Nimwegen E."/>
            <person name="Verardo R."/>
            <person name="Wei C.L."/>
            <person name="Yagi K."/>
            <person name="Yamanishi H."/>
            <person name="Zabarovsky E."/>
            <person name="Zhu S."/>
            <person name="Zimmer A."/>
            <person name="Hide W."/>
            <person name="Bult C."/>
            <person name="Grimmond S.M."/>
            <person name="Teasdale R.D."/>
            <person name="Liu E.T."/>
            <person name="Brusic V."/>
            <person name="Quackenbush J."/>
            <person name="Wahlestedt C."/>
            <person name="Mattick J.S."/>
            <person name="Hume D.A."/>
            <person name="Kai C."/>
            <person name="Sasaki D."/>
            <person name="Tomaru Y."/>
            <person name="Fukuda S."/>
            <person name="Kanamori-Katayama M."/>
            <person name="Suzuki M."/>
            <person name="Aoki J."/>
            <person name="Arakawa T."/>
            <person name="Iida J."/>
            <person name="Imamura K."/>
            <person name="Itoh M."/>
            <person name="Kato T."/>
            <person name="Kawaji H."/>
            <person name="Kawagashira N."/>
            <person name="Kawashima T."/>
            <person name="Kojima M."/>
            <person name="Kondo S."/>
            <person name="Konno H."/>
            <person name="Nakano K."/>
            <person name="Ninomiya N."/>
            <person name="Nishio T."/>
            <person name="Okada M."/>
            <person name="Plessy C."/>
            <person name="Shibata K."/>
            <person name="Shiraki T."/>
            <person name="Suzuki S."/>
            <person name="Tagami M."/>
            <person name="Waki K."/>
            <person name="Watahiki A."/>
            <person name="Okamura-Oho Y."/>
            <person name="Suzuki H."/>
            <person name="Kawai J."/>
            <person name="Hayashizaki Y."/>
        </authorList>
    </citation>
    <scope>NUCLEOTIDE SEQUENCE [LARGE SCALE MRNA]</scope>
    <source>
        <strain>C57BL/6J</strain>
        <tissue>Brain cortex</tissue>
        <tissue>Corpora quadrigemina</tissue>
    </source>
</reference>
<reference key="2">
    <citation type="journal article" date="2004" name="Genome Res.">
        <title>The status, quality, and expansion of the NIH full-length cDNA project: the Mammalian Gene Collection (MGC).</title>
        <authorList>
            <consortium name="The MGC Project Team"/>
        </authorList>
    </citation>
    <scope>NUCLEOTIDE SEQUENCE [LARGE SCALE MRNA]</scope>
    <source>
        <strain>Czech II</strain>
        <tissue>Mammary tumor</tissue>
    </source>
</reference>